<keyword id="KW-0028">Amino-acid biosynthesis</keyword>
<keyword id="KW-0057">Aromatic amino acid biosynthesis</keyword>
<keyword id="KW-0328">Glycosyltransferase</keyword>
<keyword id="KW-0460">Magnesium</keyword>
<keyword id="KW-0479">Metal-binding</keyword>
<keyword id="KW-1185">Reference proteome</keyword>
<keyword id="KW-0808">Transferase</keyword>
<keyword id="KW-0822">Tryptophan biosynthesis</keyword>
<name>TRPD_FLAPJ</name>
<dbReference type="EC" id="2.4.2.18" evidence="1"/>
<dbReference type="EMBL" id="AM398681">
    <property type="protein sequence ID" value="CAL42617.1"/>
    <property type="molecule type" value="Genomic_DNA"/>
</dbReference>
<dbReference type="RefSeq" id="WP_011962675.1">
    <property type="nucleotide sequence ID" value="NC_009613.3"/>
</dbReference>
<dbReference type="RefSeq" id="YP_001295435.1">
    <property type="nucleotide sequence ID" value="NC_009613.3"/>
</dbReference>
<dbReference type="SMR" id="A6GWZ4"/>
<dbReference type="STRING" id="402612.FP0511"/>
<dbReference type="EnsemblBacteria" id="CAL42617">
    <property type="protein sequence ID" value="CAL42617"/>
    <property type="gene ID" value="FP0511"/>
</dbReference>
<dbReference type="KEGG" id="fps:FP0511"/>
<dbReference type="PATRIC" id="fig|402612.5.peg.523"/>
<dbReference type="eggNOG" id="COG0547">
    <property type="taxonomic scope" value="Bacteria"/>
</dbReference>
<dbReference type="HOGENOM" id="CLU_034315_2_1_10"/>
<dbReference type="OrthoDB" id="9806430at2"/>
<dbReference type="UniPathway" id="UPA00035">
    <property type="reaction ID" value="UER00041"/>
</dbReference>
<dbReference type="Proteomes" id="UP000006394">
    <property type="component" value="Chromosome"/>
</dbReference>
<dbReference type="GO" id="GO:0005829">
    <property type="term" value="C:cytosol"/>
    <property type="evidence" value="ECO:0007669"/>
    <property type="project" value="TreeGrafter"/>
</dbReference>
<dbReference type="GO" id="GO:0004048">
    <property type="term" value="F:anthranilate phosphoribosyltransferase activity"/>
    <property type="evidence" value="ECO:0007669"/>
    <property type="project" value="UniProtKB-UniRule"/>
</dbReference>
<dbReference type="GO" id="GO:0000287">
    <property type="term" value="F:magnesium ion binding"/>
    <property type="evidence" value="ECO:0007669"/>
    <property type="project" value="UniProtKB-UniRule"/>
</dbReference>
<dbReference type="GO" id="GO:0000162">
    <property type="term" value="P:L-tryptophan biosynthetic process"/>
    <property type="evidence" value="ECO:0007669"/>
    <property type="project" value="UniProtKB-UniRule"/>
</dbReference>
<dbReference type="Gene3D" id="3.40.1030.10">
    <property type="entry name" value="Nucleoside phosphorylase/phosphoribosyltransferase catalytic domain"/>
    <property type="match status" value="1"/>
</dbReference>
<dbReference type="Gene3D" id="1.20.970.10">
    <property type="entry name" value="Transferase, Pyrimidine Nucleoside Phosphorylase, Chain C"/>
    <property type="match status" value="1"/>
</dbReference>
<dbReference type="HAMAP" id="MF_00211">
    <property type="entry name" value="TrpD"/>
    <property type="match status" value="1"/>
</dbReference>
<dbReference type="InterPro" id="IPR005940">
    <property type="entry name" value="Anthranilate_Pribosyl_Tfrase"/>
</dbReference>
<dbReference type="InterPro" id="IPR000312">
    <property type="entry name" value="Glycosyl_Trfase_fam3"/>
</dbReference>
<dbReference type="InterPro" id="IPR017459">
    <property type="entry name" value="Glycosyl_Trfase_fam3_N_dom"/>
</dbReference>
<dbReference type="InterPro" id="IPR036320">
    <property type="entry name" value="Glycosyl_Trfase_fam3_N_dom_sf"/>
</dbReference>
<dbReference type="InterPro" id="IPR035902">
    <property type="entry name" value="Nuc_phospho_transferase"/>
</dbReference>
<dbReference type="NCBIfam" id="TIGR01245">
    <property type="entry name" value="trpD"/>
    <property type="match status" value="1"/>
</dbReference>
<dbReference type="PANTHER" id="PTHR43285">
    <property type="entry name" value="ANTHRANILATE PHOSPHORIBOSYLTRANSFERASE"/>
    <property type="match status" value="1"/>
</dbReference>
<dbReference type="PANTHER" id="PTHR43285:SF2">
    <property type="entry name" value="ANTHRANILATE PHOSPHORIBOSYLTRANSFERASE"/>
    <property type="match status" value="1"/>
</dbReference>
<dbReference type="Pfam" id="PF02885">
    <property type="entry name" value="Glycos_trans_3N"/>
    <property type="match status" value="1"/>
</dbReference>
<dbReference type="Pfam" id="PF00591">
    <property type="entry name" value="Glycos_transf_3"/>
    <property type="match status" value="1"/>
</dbReference>
<dbReference type="SUPFAM" id="SSF52418">
    <property type="entry name" value="Nucleoside phosphorylase/phosphoribosyltransferase catalytic domain"/>
    <property type="match status" value="1"/>
</dbReference>
<dbReference type="SUPFAM" id="SSF47648">
    <property type="entry name" value="Nucleoside phosphorylase/phosphoribosyltransferase N-terminal domain"/>
    <property type="match status" value="1"/>
</dbReference>
<organism>
    <name type="scientific">Flavobacterium psychrophilum (strain ATCC 49511 / DSM 21280 / CIP 103535 / JIP02/86)</name>
    <dbReference type="NCBI Taxonomy" id="402612"/>
    <lineage>
        <taxon>Bacteria</taxon>
        <taxon>Pseudomonadati</taxon>
        <taxon>Bacteroidota</taxon>
        <taxon>Flavobacteriia</taxon>
        <taxon>Flavobacteriales</taxon>
        <taxon>Flavobacteriaceae</taxon>
        <taxon>Flavobacterium</taxon>
    </lineage>
</organism>
<gene>
    <name evidence="1" type="primary">trpD</name>
    <name type="ordered locus">FP0511</name>
</gene>
<protein>
    <recommendedName>
        <fullName evidence="1">Anthranilate phosphoribosyltransferase</fullName>
        <ecNumber evidence="1">2.4.2.18</ecNumber>
    </recommendedName>
</protein>
<sequence length="330" mass="35877">MKNILNRLINHETLSKQEAKNMLVNISNGSYNPSQIASFLTVYMMRNITINELAGFREALLELCIPIDLSAYNTIDLCGTGGDGKDTFNISTLASFVTAGAGIKVAKHGNYGVSSISGSSNVMENLGIKFSNDPIFLEKCIDQAGICVLHAPLFHPAMKNVAPIRKELAVKTFFNMLGPMVNPSFPKNQLVGVFNLELARMYSYLYQNTKTNYTILHSLDGYDEISLTGNTKTITNKMEGMLKPEDFGVNLLSQTDIQGGTTIQESAQMFVTILSGKGTEAQNNVVCANAGMAIATVNNLNPIQGFELAKESLLSGKGLETLKKLQQLSL</sequence>
<reference key="1">
    <citation type="journal article" date="2007" name="Nat. Biotechnol.">
        <title>Complete genome sequence of the fish pathogen Flavobacterium psychrophilum.</title>
        <authorList>
            <person name="Duchaud E."/>
            <person name="Boussaha M."/>
            <person name="Loux V."/>
            <person name="Bernardet J.-F."/>
            <person name="Michel C."/>
            <person name="Kerouault B."/>
            <person name="Mondot S."/>
            <person name="Nicolas P."/>
            <person name="Bossy R."/>
            <person name="Caron C."/>
            <person name="Bessieres P."/>
            <person name="Gibrat J.-F."/>
            <person name="Claverol S."/>
            <person name="Dumetz F."/>
            <person name="Le Henaff M."/>
            <person name="Benmansour A."/>
        </authorList>
    </citation>
    <scope>NUCLEOTIDE SEQUENCE [LARGE SCALE GENOMIC DNA]</scope>
    <source>
        <strain>ATCC 49511 / DSM 21280 / CIP 103535 / JIP02/86</strain>
    </source>
</reference>
<accession>A6GWZ4</accession>
<feature type="chain" id="PRO_1000099804" description="Anthranilate phosphoribosyltransferase">
    <location>
        <begin position="1"/>
        <end position="330"/>
    </location>
</feature>
<feature type="binding site" evidence="1">
    <location>
        <position position="79"/>
    </location>
    <ligand>
        <name>5-phospho-alpha-D-ribose 1-diphosphate</name>
        <dbReference type="ChEBI" id="CHEBI:58017"/>
    </ligand>
</feature>
<feature type="binding site" evidence="1">
    <location>
        <position position="79"/>
    </location>
    <ligand>
        <name>anthranilate</name>
        <dbReference type="ChEBI" id="CHEBI:16567"/>
        <label>1</label>
    </ligand>
</feature>
<feature type="binding site" evidence="1">
    <location>
        <begin position="82"/>
        <end position="83"/>
    </location>
    <ligand>
        <name>5-phospho-alpha-D-ribose 1-diphosphate</name>
        <dbReference type="ChEBI" id="CHEBI:58017"/>
    </ligand>
</feature>
<feature type="binding site" evidence="1">
    <location>
        <position position="87"/>
    </location>
    <ligand>
        <name>5-phospho-alpha-D-ribose 1-diphosphate</name>
        <dbReference type="ChEBI" id="CHEBI:58017"/>
    </ligand>
</feature>
<feature type="binding site" evidence="1">
    <location>
        <begin position="89"/>
        <end position="92"/>
    </location>
    <ligand>
        <name>5-phospho-alpha-D-ribose 1-diphosphate</name>
        <dbReference type="ChEBI" id="CHEBI:58017"/>
    </ligand>
</feature>
<feature type="binding site" evidence="1">
    <location>
        <position position="91"/>
    </location>
    <ligand>
        <name>Mg(2+)</name>
        <dbReference type="ChEBI" id="CHEBI:18420"/>
        <label>1</label>
    </ligand>
</feature>
<feature type="binding site" evidence="1">
    <location>
        <begin position="107"/>
        <end position="115"/>
    </location>
    <ligand>
        <name>5-phospho-alpha-D-ribose 1-diphosphate</name>
        <dbReference type="ChEBI" id="CHEBI:58017"/>
    </ligand>
</feature>
<feature type="binding site" evidence="1">
    <location>
        <position position="110"/>
    </location>
    <ligand>
        <name>anthranilate</name>
        <dbReference type="ChEBI" id="CHEBI:16567"/>
        <label>1</label>
    </ligand>
</feature>
<feature type="binding site" evidence="1">
    <location>
        <position position="119"/>
    </location>
    <ligand>
        <name>5-phospho-alpha-D-ribose 1-diphosphate</name>
        <dbReference type="ChEBI" id="CHEBI:58017"/>
    </ligand>
</feature>
<feature type="binding site" evidence="1">
    <location>
        <position position="165"/>
    </location>
    <ligand>
        <name>anthranilate</name>
        <dbReference type="ChEBI" id="CHEBI:16567"/>
        <label>2</label>
    </ligand>
</feature>
<feature type="binding site" evidence="1">
    <location>
        <position position="223"/>
    </location>
    <ligand>
        <name>Mg(2+)</name>
        <dbReference type="ChEBI" id="CHEBI:18420"/>
        <label>2</label>
    </ligand>
</feature>
<feature type="binding site" evidence="1">
    <location>
        <position position="224"/>
    </location>
    <ligand>
        <name>Mg(2+)</name>
        <dbReference type="ChEBI" id="CHEBI:18420"/>
        <label>1</label>
    </ligand>
</feature>
<feature type="binding site" evidence="1">
    <location>
        <position position="224"/>
    </location>
    <ligand>
        <name>Mg(2+)</name>
        <dbReference type="ChEBI" id="CHEBI:18420"/>
        <label>2</label>
    </ligand>
</feature>
<proteinExistence type="inferred from homology"/>
<comment type="function">
    <text evidence="1">Catalyzes the transfer of the phosphoribosyl group of 5-phosphorylribose-1-pyrophosphate (PRPP) to anthranilate to yield N-(5'-phosphoribosyl)-anthranilate (PRA).</text>
</comment>
<comment type="catalytic activity">
    <reaction evidence="1">
        <text>N-(5-phospho-beta-D-ribosyl)anthranilate + diphosphate = 5-phospho-alpha-D-ribose 1-diphosphate + anthranilate</text>
        <dbReference type="Rhea" id="RHEA:11768"/>
        <dbReference type="ChEBI" id="CHEBI:16567"/>
        <dbReference type="ChEBI" id="CHEBI:18277"/>
        <dbReference type="ChEBI" id="CHEBI:33019"/>
        <dbReference type="ChEBI" id="CHEBI:58017"/>
        <dbReference type="EC" id="2.4.2.18"/>
    </reaction>
</comment>
<comment type="cofactor">
    <cofactor evidence="1">
        <name>Mg(2+)</name>
        <dbReference type="ChEBI" id="CHEBI:18420"/>
    </cofactor>
    <text evidence="1">Binds 2 magnesium ions per monomer.</text>
</comment>
<comment type="pathway">
    <text evidence="1">Amino-acid biosynthesis; L-tryptophan biosynthesis; L-tryptophan from chorismate: step 2/5.</text>
</comment>
<comment type="subunit">
    <text evidence="1">Homodimer.</text>
</comment>
<comment type="similarity">
    <text evidence="1">Belongs to the anthranilate phosphoribosyltransferase family.</text>
</comment>
<evidence type="ECO:0000255" key="1">
    <source>
        <dbReference type="HAMAP-Rule" id="MF_00211"/>
    </source>
</evidence>